<dbReference type="EMBL" id="Z73575">
    <property type="protein sequence ID" value="CAA97934.1"/>
    <property type="molecule type" value="Genomic_DNA"/>
</dbReference>
<dbReference type="EMBL" id="AY693227">
    <property type="protein sequence ID" value="AAT93246.1"/>
    <property type="molecule type" value="Genomic_DNA"/>
</dbReference>
<dbReference type="EMBL" id="BK006949">
    <property type="protein sequence ID" value="DAA11217.1"/>
    <property type="molecule type" value="Genomic_DNA"/>
</dbReference>
<dbReference type="PIR" id="S65238">
    <property type="entry name" value="S65238"/>
</dbReference>
<dbReference type="RefSeq" id="NP_015105.1">
    <property type="nucleotide sequence ID" value="NM_001184033.1"/>
</dbReference>
<dbReference type="SMR" id="Q08966"/>
<dbReference type="BioGRID" id="35966">
    <property type="interactions" value="152"/>
</dbReference>
<dbReference type="ComplexPortal" id="CPX-1691">
    <property type="entry name" value="PCL8-PHO85 kinase complex"/>
</dbReference>
<dbReference type="DIP" id="DIP-1509N"/>
<dbReference type="FunCoup" id="Q08966">
    <property type="interactions" value="41"/>
</dbReference>
<dbReference type="IntAct" id="Q08966">
    <property type="interactions" value="6"/>
</dbReference>
<dbReference type="MINT" id="Q08966"/>
<dbReference type="STRING" id="4932.YPL219W"/>
<dbReference type="iPTMnet" id="Q08966"/>
<dbReference type="PaxDb" id="4932-YPL219W"/>
<dbReference type="PeptideAtlas" id="Q08966"/>
<dbReference type="EnsemblFungi" id="YPL219W_mRNA">
    <property type="protein sequence ID" value="YPL219W"/>
    <property type="gene ID" value="YPL219W"/>
</dbReference>
<dbReference type="GeneID" id="855882"/>
<dbReference type="KEGG" id="sce:YPL219W"/>
<dbReference type="AGR" id="SGD:S000006140"/>
<dbReference type="SGD" id="S000006140">
    <property type="gene designation" value="PCL8"/>
</dbReference>
<dbReference type="VEuPathDB" id="FungiDB:YPL219W"/>
<dbReference type="eggNOG" id="KOG1674">
    <property type="taxonomic scope" value="Eukaryota"/>
</dbReference>
<dbReference type="GeneTree" id="ENSGT00390000000862"/>
<dbReference type="HOGENOM" id="CLU_043984_0_0_1"/>
<dbReference type="InParanoid" id="Q08966"/>
<dbReference type="OMA" id="RIQSKCM"/>
<dbReference type="OrthoDB" id="5304883at2759"/>
<dbReference type="BioCyc" id="YEAST:G3O-34108-MONOMER"/>
<dbReference type="BioGRID-ORCS" id="855882">
    <property type="hits" value="5 hits in 10 CRISPR screens"/>
</dbReference>
<dbReference type="PRO" id="PR:Q08966"/>
<dbReference type="Proteomes" id="UP000002311">
    <property type="component" value="Chromosome XVI"/>
</dbReference>
<dbReference type="RNAct" id="Q08966">
    <property type="molecule type" value="protein"/>
</dbReference>
<dbReference type="GO" id="GO:0000307">
    <property type="term" value="C:cyclin-dependent protein kinase holoenzyme complex"/>
    <property type="evidence" value="ECO:0000353"/>
    <property type="project" value="ComplexPortal"/>
</dbReference>
<dbReference type="GO" id="GO:0005737">
    <property type="term" value="C:cytoplasm"/>
    <property type="evidence" value="ECO:0007669"/>
    <property type="project" value="UniProtKB-SubCell"/>
</dbReference>
<dbReference type="GO" id="GO:0005634">
    <property type="term" value="C:nucleus"/>
    <property type="evidence" value="ECO:0000318"/>
    <property type="project" value="GO_Central"/>
</dbReference>
<dbReference type="GO" id="GO:0016538">
    <property type="term" value="F:cyclin-dependent protein serine/threonine kinase regulator activity"/>
    <property type="evidence" value="ECO:0000250"/>
    <property type="project" value="SGD"/>
</dbReference>
<dbReference type="GO" id="GO:0019901">
    <property type="term" value="F:protein kinase binding"/>
    <property type="evidence" value="ECO:0007669"/>
    <property type="project" value="InterPro"/>
</dbReference>
<dbReference type="GO" id="GO:0005977">
    <property type="term" value="P:glycogen metabolic process"/>
    <property type="evidence" value="ECO:0007669"/>
    <property type="project" value="UniProtKB-KW"/>
</dbReference>
<dbReference type="GO" id="GO:0045719">
    <property type="term" value="P:negative regulation of glycogen biosynthetic process"/>
    <property type="evidence" value="ECO:0000315"/>
    <property type="project" value="SGD"/>
</dbReference>
<dbReference type="GO" id="GO:0005979">
    <property type="term" value="P:regulation of glycogen biosynthetic process"/>
    <property type="evidence" value="ECO:0000303"/>
    <property type="project" value="ComplexPortal"/>
</dbReference>
<dbReference type="CDD" id="cd20558">
    <property type="entry name" value="CYCLIN_ScPCL7-like"/>
    <property type="match status" value="1"/>
</dbReference>
<dbReference type="FunFam" id="1.10.472.10:FF:000147">
    <property type="entry name" value="PCL8p Cyclin"/>
    <property type="match status" value="1"/>
</dbReference>
<dbReference type="Gene3D" id="1.10.472.10">
    <property type="entry name" value="Cyclin-like"/>
    <property type="match status" value="1"/>
</dbReference>
<dbReference type="InterPro" id="IPR013922">
    <property type="entry name" value="Cyclin_PHO80-like"/>
</dbReference>
<dbReference type="PANTHER" id="PTHR15615">
    <property type="match status" value="1"/>
</dbReference>
<dbReference type="PANTHER" id="PTHR15615:SF123">
    <property type="entry name" value="PHO85 CYCLIN-10-RELATED"/>
    <property type="match status" value="1"/>
</dbReference>
<dbReference type="Pfam" id="PF08613">
    <property type="entry name" value="Cyclin"/>
    <property type="match status" value="1"/>
</dbReference>
<evidence type="ECO:0000256" key="1">
    <source>
        <dbReference type="SAM" id="MobiDB-lite"/>
    </source>
</evidence>
<evidence type="ECO:0000269" key="2">
    <source>
    </source>
</evidence>
<evidence type="ECO:0000269" key="3">
    <source>
    </source>
</evidence>
<evidence type="ECO:0000269" key="4">
    <source>
    </source>
</evidence>
<evidence type="ECO:0000305" key="5"/>
<evidence type="ECO:0007744" key="6">
    <source>
    </source>
</evidence>
<sequence length="492" mass="55431">MANDQDPNKSLINDALTRSMSEFYDDDDDNDSDMCRANDEGEDVFDLPLKVGVSQSRNFSEVNDVLDPLSSLHGPSKKVRFEQQKQQQQHQQLHNDFNTDFNLKSPSSKKMGVEQLIQSANEINDYLANNIDKVNSFNSELLSGSGKLPGRVKSDTATQGTGRLDSMSNFALSDTELDNDDDNYLLDPLANASSTTPTVEHHGYSLLDKALSTSDKEKIYTNKVNSNSQIDTDNHSHESGNTTNNETDENESSEILDYTKFDSFPYPPSSAPNGEPPDLKVLSIECEQENEKELRRISLLLDHYESIPKIPELSDDEALSKFRENIELILQLSKKINDNANTLAISSEDPQKFVNFVMKNPPSLSFRDFIDRIQNKCMFGAVVYLGATYLLQLVFLTRDEMDGPIKLKAKLQEDQAHRIIISTIRIATKLLEDFVHSQNYICKVFGISKRLLTKLEISFMASVNFDGLMITCEKLEKTLHILDDTRQALGNT</sequence>
<accession>Q08966</accession>
<accession>D6W3F1</accession>
<accession>Q6B153</accession>
<proteinExistence type="evidence at protein level"/>
<organism>
    <name type="scientific">Saccharomyces cerevisiae (strain ATCC 204508 / S288c)</name>
    <name type="common">Baker's yeast</name>
    <dbReference type="NCBI Taxonomy" id="559292"/>
    <lineage>
        <taxon>Eukaryota</taxon>
        <taxon>Fungi</taxon>
        <taxon>Dikarya</taxon>
        <taxon>Ascomycota</taxon>
        <taxon>Saccharomycotina</taxon>
        <taxon>Saccharomycetes</taxon>
        <taxon>Saccharomycetales</taxon>
        <taxon>Saccharomycetaceae</taxon>
        <taxon>Saccharomyces</taxon>
    </lineage>
</organism>
<protein>
    <recommendedName>
        <fullName>PHO85 cyclin-8</fullName>
    </recommendedName>
</protein>
<reference key="1">
    <citation type="journal article" date="1997" name="Nature">
        <title>The nucleotide sequence of Saccharomyces cerevisiae chromosome XVI.</title>
        <authorList>
            <person name="Bussey H."/>
            <person name="Storms R.K."/>
            <person name="Ahmed A."/>
            <person name="Albermann K."/>
            <person name="Allen E."/>
            <person name="Ansorge W."/>
            <person name="Araujo R."/>
            <person name="Aparicio A."/>
            <person name="Barrell B.G."/>
            <person name="Badcock K."/>
            <person name="Benes V."/>
            <person name="Botstein D."/>
            <person name="Bowman S."/>
            <person name="Brueckner M."/>
            <person name="Carpenter J."/>
            <person name="Cherry J.M."/>
            <person name="Chung E."/>
            <person name="Churcher C.M."/>
            <person name="Coster F."/>
            <person name="Davis K."/>
            <person name="Davis R.W."/>
            <person name="Dietrich F.S."/>
            <person name="Delius H."/>
            <person name="DiPaolo T."/>
            <person name="Dubois E."/>
            <person name="Duesterhoeft A."/>
            <person name="Duncan M."/>
            <person name="Floeth M."/>
            <person name="Fortin N."/>
            <person name="Friesen J.D."/>
            <person name="Fritz C."/>
            <person name="Goffeau A."/>
            <person name="Hall J."/>
            <person name="Hebling U."/>
            <person name="Heumann K."/>
            <person name="Hilbert H."/>
            <person name="Hillier L.W."/>
            <person name="Hunicke-Smith S."/>
            <person name="Hyman R.W."/>
            <person name="Johnston M."/>
            <person name="Kalman S."/>
            <person name="Kleine K."/>
            <person name="Komp C."/>
            <person name="Kurdi O."/>
            <person name="Lashkari D."/>
            <person name="Lew H."/>
            <person name="Lin A."/>
            <person name="Lin D."/>
            <person name="Louis E.J."/>
            <person name="Marathe R."/>
            <person name="Messenguy F."/>
            <person name="Mewes H.-W."/>
            <person name="Mirtipati S."/>
            <person name="Moestl D."/>
            <person name="Mueller-Auer S."/>
            <person name="Namath A."/>
            <person name="Nentwich U."/>
            <person name="Oefner P."/>
            <person name="Pearson D."/>
            <person name="Petel F.X."/>
            <person name="Pohl T.M."/>
            <person name="Purnelle B."/>
            <person name="Rajandream M.A."/>
            <person name="Rechmann S."/>
            <person name="Rieger M."/>
            <person name="Riles L."/>
            <person name="Roberts D."/>
            <person name="Schaefer M."/>
            <person name="Scharfe M."/>
            <person name="Scherens B."/>
            <person name="Schramm S."/>
            <person name="Schroeder M."/>
            <person name="Sdicu A.-M."/>
            <person name="Tettelin H."/>
            <person name="Urrestarazu L.A."/>
            <person name="Ushinsky S."/>
            <person name="Vierendeels F."/>
            <person name="Vissers S."/>
            <person name="Voss H."/>
            <person name="Walsh S.V."/>
            <person name="Wambutt R."/>
            <person name="Wang Y."/>
            <person name="Wedler E."/>
            <person name="Wedler H."/>
            <person name="Winnett E."/>
            <person name="Zhong W.-W."/>
            <person name="Zollner A."/>
            <person name="Vo D.H."/>
            <person name="Hani J."/>
        </authorList>
    </citation>
    <scope>NUCLEOTIDE SEQUENCE [LARGE SCALE GENOMIC DNA]</scope>
    <source>
        <strain>ATCC 204508 / S288c</strain>
    </source>
</reference>
<reference key="2">
    <citation type="journal article" date="2014" name="G3 (Bethesda)">
        <title>The reference genome sequence of Saccharomyces cerevisiae: Then and now.</title>
        <authorList>
            <person name="Engel S.R."/>
            <person name="Dietrich F.S."/>
            <person name="Fisk D.G."/>
            <person name="Binkley G."/>
            <person name="Balakrishnan R."/>
            <person name="Costanzo M.C."/>
            <person name="Dwight S.S."/>
            <person name="Hitz B.C."/>
            <person name="Karra K."/>
            <person name="Nash R.S."/>
            <person name="Weng S."/>
            <person name="Wong E.D."/>
            <person name="Lloyd P."/>
            <person name="Skrzypek M.S."/>
            <person name="Miyasato S.R."/>
            <person name="Simison M."/>
            <person name="Cherry J.M."/>
        </authorList>
    </citation>
    <scope>GENOME REANNOTATION</scope>
    <source>
        <strain>ATCC 204508 / S288c</strain>
    </source>
</reference>
<reference key="3">
    <citation type="journal article" date="2007" name="Genome Res.">
        <title>Approaching a complete repository of sequence-verified protein-encoding clones for Saccharomyces cerevisiae.</title>
        <authorList>
            <person name="Hu Y."/>
            <person name="Rolfs A."/>
            <person name="Bhullar B."/>
            <person name="Murthy T.V.S."/>
            <person name="Zhu C."/>
            <person name="Berger M.F."/>
            <person name="Camargo A.A."/>
            <person name="Kelley F."/>
            <person name="McCarron S."/>
            <person name="Jepson D."/>
            <person name="Richardson A."/>
            <person name="Raphael J."/>
            <person name="Moreira D."/>
            <person name="Taycher E."/>
            <person name="Zuo D."/>
            <person name="Mohr S."/>
            <person name="Kane M.F."/>
            <person name="Williamson J."/>
            <person name="Simpson A.J.G."/>
            <person name="Bulyk M.L."/>
            <person name="Harlow E."/>
            <person name="Marsischky G."/>
            <person name="Kolodner R.D."/>
            <person name="LaBaer J."/>
        </authorList>
    </citation>
    <scope>NUCLEOTIDE SEQUENCE [GENOMIC DNA]</scope>
    <source>
        <strain>ATCC 204508 / S288c</strain>
    </source>
</reference>
<reference key="4">
    <citation type="journal article" date="1997" name="Mol. Cell. Biol.">
        <title>A family of cyclin-like proteins that interact with the Pho85 cyclin-dependent kinase.</title>
        <authorList>
            <person name="Measday V."/>
            <person name="Moore L."/>
            <person name="Retnakaran R."/>
            <person name="Lee J."/>
            <person name="Donoviel M."/>
            <person name="Neiman A.M."/>
            <person name="Andrews B.J."/>
        </authorList>
    </citation>
    <scope>INTERACTION WITH PHO85</scope>
</reference>
<reference key="5">
    <citation type="journal article" date="1998" name="Mol. Cell. Biol.">
        <title>Cyclin partners determine Pho85 protein kinase substrate specificity in vitro and in vivo: control of glycogen biosynthesis by Pcl8 and Pcl10.</title>
        <authorList>
            <person name="Huang D."/>
            <person name="Moffat J."/>
            <person name="Wilson W.A."/>
            <person name="Moore L."/>
            <person name="Cheng C."/>
            <person name="Roach P.J."/>
            <person name="Andrews B.J."/>
        </authorList>
    </citation>
    <scope>FUNCTION</scope>
</reference>
<reference key="6">
    <citation type="journal article" date="2003" name="J. Biol. Chem.">
        <title>Pho85 phosphorylates the Glc7 protein phosphatase regulator Glc8 in vivo.</title>
        <authorList>
            <person name="Tan Y.S.H."/>
            <person name="Morcos P.A."/>
            <person name="Cannon J.F."/>
        </authorList>
    </citation>
    <scope>FUNCTION</scope>
</reference>
<reference key="7">
    <citation type="journal article" date="2003" name="Nature">
        <title>Global analysis of protein expression in yeast.</title>
        <authorList>
            <person name="Ghaemmaghami S."/>
            <person name="Huh W.-K."/>
            <person name="Bower K."/>
            <person name="Howson R.W."/>
            <person name="Belle A."/>
            <person name="Dephoure N."/>
            <person name="O'Shea E.K."/>
            <person name="Weissman J.S."/>
        </authorList>
    </citation>
    <scope>LEVEL OF PROTEIN EXPRESSION [LARGE SCALE ANALYSIS]</scope>
</reference>
<reference key="8">
    <citation type="journal article" date="2009" name="Science">
        <title>Global analysis of Cdk1 substrate phosphorylation sites provides insights into evolution.</title>
        <authorList>
            <person name="Holt L.J."/>
            <person name="Tuch B.B."/>
            <person name="Villen J."/>
            <person name="Johnson A.D."/>
            <person name="Gygi S.P."/>
            <person name="Morgan D.O."/>
        </authorList>
    </citation>
    <scope>PHOSPHORYLATION [LARGE SCALE ANALYSIS] AT SER-32</scope>
    <scope>IDENTIFICATION BY MASS SPECTROMETRY [LARGE SCALE ANALYSIS]</scope>
</reference>
<gene>
    <name type="primary">PCL8</name>
    <name type="ordered locus">YPL219W</name>
    <name type="ORF">P1745</name>
</gene>
<keyword id="KW-0119">Carbohydrate metabolism</keyword>
<keyword id="KW-0195">Cyclin</keyword>
<keyword id="KW-0963">Cytoplasm</keyword>
<keyword id="KW-0321">Glycogen metabolism</keyword>
<keyword id="KW-0539">Nucleus</keyword>
<keyword id="KW-0597">Phosphoprotein</keyword>
<keyword id="KW-1185">Reference proteome</keyword>
<feature type="chain" id="PRO_0000271787" description="PHO85 cyclin-8">
    <location>
        <begin position="1"/>
        <end position="492"/>
    </location>
</feature>
<feature type="region of interest" description="Disordered" evidence="1">
    <location>
        <begin position="1"/>
        <end position="32"/>
    </location>
</feature>
<feature type="region of interest" description="Disordered" evidence="1">
    <location>
        <begin position="143"/>
        <end position="163"/>
    </location>
</feature>
<feature type="region of interest" description="Disordered" evidence="1">
    <location>
        <begin position="223"/>
        <end position="252"/>
    </location>
</feature>
<feature type="compositionally biased region" description="Polar residues" evidence="1">
    <location>
        <begin position="8"/>
        <end position="20"/>
    </location>
</feature>
<feature type="compositionally biased region" description="Acidic residues" evidence="1">
    <location>
        <begin position="23"/>
        <end position="32"/>
    </location>
</feature>
<feature type="modified residue" description="Phosphoserine" evidence="6">
    <location>
        <position position="32"/>
    </location>
</feature>
<feature type="sequence conflict" description="In Ref. 3; AAT93246." evidence="5" ref="3">
    <original>N</original>
    <variation>T</variation>
    <location>
        <position position="234"/>
    </location>
</feature>
<name>PCL8_YEAST</name>
<comment type="function">
    <text evidence="2 4">Cyclin partner of the cyclin-dependent kinase (CDK) PHO85. Together with cyclin PCL10, negatively controls glycogen accumulation under favorable growth conditions. Involved in phosphorylation and negative regulation of glycogen synthase GSY2. Also has minor GLC8 kinase activity.</text>
</comment>
<comment type="subunit">
    <text>Forms a cyclin-CDK complex with PHO85.</text>
</comment>
<comment type="interaction">
    <interactant intactId="EBI-37056">
        <id>Q08966</id>
    </interactant>
    <interactant intactId="EBI-13327">
        <id>P17157</id>
        <label>PHO85</label>
    </interactant>
    <organismsDiffer>false</organismsDiffer>
    <experiments>9</experiments>
</comment>
<comment type="subcellular location">
    <subcellularLocation>
        <location>Cytoplasm</location>
    </subcellularLocation>
    <subcellularLocation>
        <location>Nucleus</location>
    </subcellularLocation>
</comment>
<comment type="miscellaneous">
    <text evidence="3">Present with 396 molecules/cell in log phase SD medium.</text>
</comment>
<comment type="similarity">
    <text evidence="5">Belongs to the cyclin family. PHO80 subfamily.</text>
</comment>